<sequence length="271" mass="29390">MPLSSQPAILIIGGAEDKVHGREILQTFWSRSGGNDAIIGIIPSASREPLLIGERYQTIFSDMGVKELKVLDIRDRAQGDDSGYRLFVEQCTGIFMTGGDQLRLCGLLADTPLMDRIRQRVHNGEISLAGTSAGAAVMGHHMIAGGSSGEWPNRALVDMAVGLGIVPEIVVDQHFHNRNRMARLLSAISTHPELLGLGIDEDTCAMFERDGSVKVIGQGTVSFVDARDMSYTNAALVGANAPLSLHNLRLNILVHGEVYHQVKQRAFPRVT</sequence>
<protein>
    <recommendedName>
        <fullName>Cyanophycinase</fullName>
        <ecNumber>3.4.15.6</ecNumber>
    </recommendedName>
</protein>
<reference key="1">
    <citation type="journal article" date="1996" name="DNA Res.">
        <title>Sequence analysis of the genome of the unicellular cyanobacterium Synechocystis sp. strain PCC6803. II. Sequence determination of the entire genome and assignment of potential protein-coding regions.</title>
        <authorList>
            <person name="Kaneko T."/>
            <person name="Sato S."/>
            <person name="Kotani H."/>
            <person name="Tanaka A."/>
            <person name="Asamizu E."/>
            <person name="Nakamura Y."/>
            <person name="Miyajima N."/>
            <person name="Hirosawa M."/>
            <person name="Sugiura M."/>
            <person name="Sasamoto S."/>
            <person name="Kimura T."/>
            <person name="Hosouchi T."/>
            <person name="Matsuno A."/>
            <person name="Muraki A."/>
            <person name="Nakazaki N."/>
            <person name="Naruo K."/>
            <person name="Okumura S."/>
            <person name="Shimpo S."/>
            <person name="Takeuchi C."/>
            <person name="Wada T."/>
            <person name="Watanabe A."/>
            <person name="Yamada M."/>
            <person name="Yasuda M."/>
            <person name="Tabata S."/>
        </authorList>
    </citation>
    <scope>NUCLEOTIDE SEQUENCE [LARGE SCALE GENOMIC DNA]</scope>
    <source>
        <strain>ATCC 27184 / PCC 6803 / Kazusa</strain>
    </source>
</reference>
<reference key="2">
    <citation type="journal article" date="1999" name="Eur. J. Biochem.">
        <title>Cyanophycinase, a peptidase degrading the cyanobacterial reserve material multi-L-arginyl-poly-L-aspartic acid (cyanophycin): molecular cloning of the gene of Synechocystis sp. PCC 6803, expression in Escherichia coli, and biochemical characterization of the purified enzyme.</title>
        <authorList>
            <person name="Richter R."/>
            <person name="Hejazi M."/>
            <person name="Kraft R."/>
            <person name="Ziegler K."/>
            <person name="Lockau W."/>
        </authorList>
    </citation>
    <scope>PROTEIN SEQUENCE OF 2-16</scope>
    <scope>CLEAVAGE OF INITIATOR METHIONINE</scope>
    <scope>FUNCTION</scope>
    <scope>CATALYTIC ACTIVITY</scope>
    <scope>BIOPHYSICOCHEMICAL PROPERTIES</scope>
</reference>
<reference key="3">
    <citation type="journal article" date="2009" name="J. Mol. Biol.">
        <title>The structural basis of beta-peptide-specific cleavage by the serine protease cyanophycinase.</title>
        <authorList>
            <person name="Law A.M."/>
            <person name="Lai S.W."/>
            <person name="Tavares J."/>
            <person name="Kimber M.S."/>
        </authorList>
    </citation>
    <scope>X-RAY CRYSTALLOGRAPHY (1.50 ANGSTROMS) OF APOPROTEIN</scope>
    <scope>FUNCTION</scope>
    <scope>CATALYTIC ACTIVITY</scope>
    <scope>BIOPHYSICOCHEMICAL PROPERTIES</scope>
    <scope>SUBUNIT</scope>
    <scope>ACTIVE SITES</scope>
    <scope>MUTAGENESIS OF ASP-17; ASP-100; GLN-101; SER-132; ASP-158; ASP-172; GLN-173; ARG-178; ARG-180; ARG-183 AND ASP-202</scope>
</reference>
<organism>
    <name type="scientific">Synechocystis sp. (strain ATCC 27184 / PCC 6803 / Kazusa)</name>
    <dbReference type="NCBI Taxonomy" id="1111708"/>
    <lineage>
        <taxon>Bacteria</taxon>
        <taxon>Bacillati</taxon>
        <taxon>Cyanobacteriota</taxon>
        <taxon>Cyanophyceae</taxon>
        <taxon>Synechococcales</taxon>
        <taxon>Merismopediaceae</taxon>
        <taxon>Synechocystis</taxon>
    </lineage>
</organism>
<comment type="function">
    <text evidence="1 2">Exopeptidase that catalyzes the hydrolytic cleavage of multi-L-arginyl-poly-L-aspartic acid (cyanophycin; a water-insoluble reserve polymer) into aspartate-arginine dipeptides.</text>
</comment>
<comment type="catalytic activity">
    <reaction evidence="1 2">
        <text>[L-4-(L-arginin-2-N-yl)aspartate](n) + H2O = [L-4-(L-arginin-2-N-yl)aspartate](n-1) + L-4-(L-arginin-2-N-yl)aspartate</text>
        <dbReference type="Rhea" id="RHEA:12845"/>
        <dbReference type="Rhea" id="RHEA-COMP:13728"/>
        <dbReference type="Rhea" id="RHEA-COMP:13734"/>
        <dbReference type="ChEBI" id="CHEBI:15377"/>
        <dbReference type="ChEBI" id="CHEBI:137986"/>
        <dbReference type="ChEBI" id="CHEBI:137991"/>
        <dbReference type="EC" id="3.4.15.6"/>
    </reaction>
</comment>
<comment type="biophysicochemical properties">
    <kinetics>
        <KM evidence="1 2">2.2 uM for cyanophycin (at 30 degrees Celsius and pH 8.0)</KM>
        <text>kcat is 16.5 sec(-1) for cyanophycin.</text>
    </kinetics>
    <phDependence>
        <text evidence="1 2">Optimum pH is 7.5.</text>
    </phDependence>
    <temperatureDependence>
        <text evidence="1 2">Optimum temperature is 35 degrees Celsius.</text>
    </temperatureDependence>
</comment>
<comment type="subunit">
    <text evidence="2">Homodimer.</text>
</comment>
<comment type="similarity">
    <text evidence="3">Belongs to the peptidase S51 family.</text>
</comment>
<dbReference type="EC" id="3.4.15.6"/>
<dbReference type="EMBL" id="BA000022">
    <property type="protein sequence ID" value="BAA17889.1"/>
    <property type="molecule type" value="Genomic_DNA"/>
</dbReference>
<dbReference type="PIR" id="S75027">
    <property type="entry name" value="S75027"/>
</dbReference>
<dbReference type="PDB" id="3EN0">
    <property type="method" value="X-ray"/>
    <property type="resolution" value="1.50 A"/>
    <property type="chains" value="A/B/C=1-271"/>
</dbReference>
<dbReference type="PDB" id="7UQW">
    <property type="method" value="X-ray"/>
    <property type="resolution" value="1.50 A"/>
    <property type="chains" value="A/B/C=1-270"/>
</dbReference>
<dbReference type="PDBsum" id="3EN0"/>
<dbReference type="PDBsum" id="7UQW"/>
<dbReference type="SMR" id="P73832"/>
<dbReference type="IntAct" id="P73832">
    <property type="interactions" value="1"/>
</dbReference>
<dbReference type="STRING" id="1148.gene:10498758"/>
<dbReference type="MEROPS" id="S51.003"/>
<dbReference type="PaxDb" id="1148-1652972"/>
<dbReference type="EnsemblBacteria" id="BAA17889">
    <property type="protein sequence ID" value="BAA17889"/>
    <property type="gene ID" value="BAA17889"/>
</dbReference>
<dbReference type="KEGG" id="syn:slr2001"/>
<dbReference type="eggNOG" id="COG4242">
    <property type="taxonomic scope" value="Bacteria"/>
</dbReference>
<dbReference type="InParanoid" id="P73832"/>
<dbReference type="PhylomeDB" id="P73832"/>
<dbReference type="BioCyc" id="MetaCyc:MONOMER-17422"/>
<dbReference type="BRENDA" id="3.4.15.6">
    <property type="organism ID" value="382"/>
</dbReference>
<dbReference type="EvolutionaryTrace" id="P73832"/>
<dbReference type="Proteomes" id="UP000001425">
    <property type="component" value="Chromosome"/>
</dbReference>
<dbReference type="GO" id="GO:0008241">
    <property type="term" value="F:peptidyl-dipeptidase activity"/>
    <property type="evidence" value="ECO:0007669"/>
    <property type="project" value="UniProtKB-EC"/>
</dbReference>
<dbReference type="GO" id="GO:0042803">
    <property type="term" value="F:protein homodimerization activity"/>
    <property type="evidence" value="ECO:0000314"/>
    <property type="project" value="UniProtKB"/>
</dbReference>
<dbReference type="GO" id="GO:0008236">
    <property type="term" value="F:serine-type peptidase activity"/>
    <property type="evidence" value="ECO:0000314"/>
    <property type="project" value="UniProtKB"/>
</dbReference>
<dbReference type="GO" id="GO:0006508">
    <property type="term" value="P:proteolysis"/>
    <property type="evidence" value="ECO:0007669"/>
    <property type="project" value="UniProtKB-KW"/>
</dbReference>
<dbReference type="CDD" id="cd03145">
    <property type="entry name" value="GAT1_cyanophycinase"/>
    <property type="match status" value="1"/>
</dbReference>
<dbReference type="Gene3D" id="3.40.50.880">
    <property type="match status" value="1"/>
</dbReference>
<dbReference type="InterPro" id="IPR029062">
    <property type="entry name" value="Class_I_gatase-like"/>
</dbReference>
<dbReference type="InterPro" id="IPR005320">
    <property type="entry name" value="Peptidase_S51"/>
</dbReference>
<dbReference type="InterPro" id="IPR011811">
    <property type="entry name" value="Peptidase_S51_cyanophycinase"/>
</dbReference>
<dbReference type="NCBIfam" id="TIGR02069">
    <property type="entry name" value="cyanophycinase"/>
    <property type="match status" value="1"/>
</dbReference>
<dbReference type="PANTHER" id="PTHR36175">
    <property type="entry name" value="CYANOPHYCINASE"/>
    <property type="match status" value="1"/>
</dbReference>
<dbReference type="PANTHER" id="PTHR36175:SF1">
    <property type="entry name" value="CYANOPHYCINASE"/>
    <property type="match status" value="1"/>
</dbReference>
<dbReference type="Pfam" id="PF03575">
    <property type="entry name" value="Peptidase_S51"/>
    <property type="match status" value="1"/>
</dbReference>
<dbReference type="PIRSF" id="PIRSF032067">
    <property type="entry name" value="Cyanophycinase"/>
    <property type="match status" value="1"/>
</dbReference>
<dbReference type="SUPFAM" id="SSF52317">
    <property type="entry name" value="Class I glutamine amidotransferase-like"/>
    <property type="match status" value="1"/>
</dbReference>
<keyword id="KW-0002">3D-structure</keyword>
<keyword id="KW-0903">Direct protein sequencing</keyword>
<keyword id="KW-0378">Hydrolase</keyword>
<keyword id="KW-0645">Protease</keyword>
<keyword id="KW-1185">Reference proteome</keyword>
<keyword id="KW-0720">Serine protease</keyword>
<feature type="initiator methionine" description="Removed" evidence="1">
    <location>
        <position position="1"/>
    </location>
</feature>
<feature type="chain" id="PRO_0000209974" description="Cyanophycinase">
    <location>
        <begin position="2"/>
        <end position="271"/>
    </location>
</feature>
<feature type="active site" description="Charge relay system" evidence="2">
    <location>
        <position position="132"/>
    </location>
</feature>
<feature type="active site" description="Charge relay system" evidence="2">
    <location>
        <position position="174"/>
    </location>
</feature>
<feature type="active site" description="Charge relay system" evidence="2">
    <location>
        <position position="201"/>
    </location>
</feature>
<feature type="mutagenesis site" description="1.7-fold decrease in enzyme activity." evidence="2">
    <original>D</original>
    <variation>A</variation>
    <location>
        <position position="17"/>
    </location>
</feature>
<feature type="mutagenesis site" description="2.5-fold decrease in enzyme activity." evidence="2">
    <original>D</original>
    <variation>A</variation>
    <location>
        <position position="100"/>
    </location>
</feature>
<feature type="mutagenesis site" description="5000-fold decrease in enzyme activity." evidence="2">
    <original>Q</original>
    <variation>A</variation>
    <location>
        <position position="101"/>
    </location>
</feature>
<feature type="mutagenesis site" description="50000-fold decrease in enzyme activity." evidence="2">
    <original>S</original>
    <variation>A</variation>
    <location>
        <position position="132"/>
    </location>
</feature>
<feature type="mutagenesis site" description="2.4-fold decrease in enzyme activity." evidence="2">
    <original>D</original>
    <variation>A</variation>
    <location>
        <position position="158"/>
    </location>
</feature>
<feature type="mutagenesis site" description="5000-fold decrease in enzyme activity." evidence="2">
    <original>D</original>
    <variation>A</variation>
    <location>
        <position position="172"/>
    </location>
</feature>
<feature type="mutagenesis site" description="200-fold decrease in enzyme activity." evidence="2">
    <original>Q</original>
    <variation>A</variation>
    <location>
        <position position="173"/>
    </location>
</feature>
<feature type="mutagenesis site" description="100-fold decrease in enzyme activity." evidence="2">
    <original>R</original>
    <variation>A</variation>
    <location>
        <position position="178"/>
    </location>
</feature>
<feature type="mutagenesis site" description="10000-fold decrease in enzyme activity." evidence="2">
    <original>R</original>
    <variation>A</variation>
    <location>
        <position position="180"/>
    </location>
</feature>
<feature type="mutagenesis site" description="10000-fold decrease in enzyme activity." evidence="2">
    <original>R</original>
    <variation>A</variation>
    <location>
        <position position="183"/>
    </location>
</feature>
<feature type="mutagenesis site" description="12.5-fold decrease in enzyme activity." evidence="2">
    <original>D</original>
    <variation>A</variation>
    <location>
        <position position="202"/>
    </location>
</feature>
<feature type="strand" evidence="4">
    <location>
        <begin position="9"/>
        <end position="12"/>
    </location>
</feature>
<feature type="strand" evidence="4">
    <location>
        <begin position="18"/>
        <end position="20"/>
    </location>
</feature>
<feature type="helix" evidence="4">
    <location>
        <begin position="23"/>
        <end position="31"/>
    </location>
</feature>
<feature type="helix" evidence="4">
    <location>
        <begin position="34"/>
        <end position="36"/>
    </location>
</feature>
<feature type="strand" evidence="4">
    <location>
        <begin position="38"/>
        <end position="42"/>
    </location>
</feature>
<feature type="helix" evidence="4">
    <location>
        <begin position="49"/>
        <end position="63"/>
    </location>
</feature>
<feature type="strand" evidence="4">
    <location>
        <begin position="66"/>
        <end position="70"/>
    </location>
</feature>
<feature type="helix" evidence="4">
    <location>
        <begin position="76"/>
        <end position="80"/>
    </location>
</feature>
<feature type="helix" evidence="4">
    <location>
        <begin position="82"/>
        <end position="90"/>
    </location>
</feature>
<feature type="strand" evidence="4">
    <location>
        <begin position="92"/>
        <end position="96"/>
    </location>
</feature>
<feature type="helix" evidence="4">
    <location>
        <begin position="101"/>
        <end position="108"/>
    </location>
</feature>
<feature type="helix" evidence="4">
    <location>
        <begin position="112"/>
        <end position="122"/>
    </location>
</feature>
<feature type="strand" evidence="4">
    <location>
        <begin position="125"/>
        <end position="131"/>
    </location>
</feature>
<feature type="helix" evidence="4">
    <location>
        <begin position="133"/>
        <end position="136"/>
    </location>
</feature>
<feature type="strand" evidence="4">
    <location>
        <begin position="139"/>
        <end position="146"/>
    </location>
</feature>
<feature type="strand" evidence="5">
    <location>
        <begin position="148"/>
        <end position="150"/>
    </location>
</feature>
<feature type="helix" evidence="4">
    <location>
        <begin position="154"/>
        <end position="156"/>
    </location>
</feature>
<feature type="strand" evidence="4">
    <location>
        <begin position="157"/>
        <end position="161"/>
    </location>
</feature>
<feature type="strand" evidence="4">
    <location>
        <begin position="169"/>
        <end position="172"/>
    </location>
</feature>
<feature type="turn" evidence="4">
    <location>
        <begin position="175"/>
        <end position="180"/>
    </location>
</feature>
<feature type="helix" evidence="4">
    <location>
        <begin position="181"/>
        <end position="190"/>
    </location>
</feature>
<feature type="strand" evidence="4">
    <location>
        <begin position="194"/>
        <end position="199"/>
    </location>
</feature>
<feature type="strand" evidence="4">
    <location>
        <begin position="203"/>
        <end position="207"/>
    </location>
</feature>
<feature type="strand" evidence="4">
    <location>
        <begin position="211"/>
        <end position="219"/>
    </location>
</feature>
<feature type="strand" evidence="4">
    <location>
        <begin position="221"/>
        <end position="225"/>
    </location>
</feature>
<feature type="turn" evidence="4">
    <location>
        <begin position="234"/>
        <end position="236"/>
    </location>
</feature>
<feature type="strand" evidence="4">
    <location>
        <begin position="245"/>
        <end position="253"/>
    </location>
</feature>
<feature type="strand" evidence="4">
    <location>
        <begin position="258"/>
        <end position="260"/>
    </location>
</feature>
<feature type="turn" evidence="4">
    <location>
        <begin position="261"/>
        <end position="264"/>
    </location>
</feature>
<feature type="strand" evidence="4">
    <location>
        <begin position="265"/>
        <end position="267"/>
    </location>
</feature>
<gene>
    <name type="primary">cphB</name>
    <name type="ordered locus">slr2001</name>
</gene>
<proteinExistence type="evidence at protein level"/>
<accession>P73832</accession>
<evidence type="ECO:0000269" key="1">
    <source>
    </source>
</evidence>
<evidence type="ECO:0000269" key="2">
    <source>
    </source>
</evidence>
<evidence type="ECO:0000305" key="3"/>
<evidence type="ECO:0007829" key="4">
    <source>
        <dbReference type="PDB" id="3EN0"/>
    </source>
</evidence>
<evidence type="ECO:0007829" key="5">
    <source>
        <dbReference type="PDB" id="7UQW"/>
    </source>
</evidence>
<name>CPHB_SYNY3</name>